<dbReference type="EC" id="2.7.7.48" evidence="2"/>
<dbReference type="EC" id="3.6.1.-" evidence="1"/>
<dbReference type="EC" id="2.7.7.88" evidence="1"/>
<dbReference type="EC" id="2.1.1.375" evidence="1"/>
<dbReference type="EMBL" id="EF157977">
    <property type="protein sequence ID" value="ABO65252.1"/>
    <property type="molecule type" value="Genomic_RNA"/>
</dbReference>
<dbReference type="RefSeq" id="YP_001285397.1">
    <property type="nucleotide sequence ID" value="NC_009528.2"/>
</dbReference>
<dbReference type="SMR" id="A4UHQ7"/>
<dbReference type="GeneID" id="5219912"/>
<dbReference type="KEGG" id="vg:5219912"/>
<dbReference type="Proteomes" id="UP000007206">
    <property type="component" value="Segment"/>
</dbReference>
<dbReference type="GO" id="GO:0030430">
    <property type="term" value="C:host cell cytoplasm"/>
    <property type="evidence" value="ECO:0007669"/>
    <property type="project" value="UniProtKB-SubCell"/>
</dbReference>
<dbReference type="GO" id="GO:0044423">
    <property type="term" value="C:virion component"/>
    <property type="evidence" value="ECO:0007669"/>
    <property type="project" value="UniProtKB-KW"/>
</dbReference>
<dbReference type="GO" id="GO:0005524">
    <property type="term" value="F:ATP binding"/>
    <property type="evidence" value="ECO:0007669"/>
    <property type="project" value="UniProtKB-KW"/>
</dbReference>
<dbReference type="GO" id="GO:0003924">
    <property type="term" value="F:GTPase activity"/>
    <property type="evidence" value="ECO:0007669"/>
    <property type="project" value="RHEA"/>
</dbReference>
<dbReference type="GO" id="GO:0004482">
    <property type="term" value="F:mRNA 5'-cap (guanine-N7-)-methyltransferase activity"/>
    <property type="evidence" value="ECO:0007669"/>
    <property type="project" value="InterPro"/>
</dbReference>
<dbReference type="GO" id="GO:0003968">
    <property type="term" value="F:RNA-directed RNA polymerase activity"/>
    <property type="evidence" value="ECO:0007669"/>
    <property type="project" value="UniProtKB-KW"/>
</dbReference>
<dbReference type="GO" id="GO:0039689">
    <property type="term" value="P:negative stranded viral RNA replication"/>
    <property type="evidence" value="ECO:0000250"/>
    <property type="project" value="UniProtKB"/>
</dbReference>
<dbReference type="InterPro" id="IPR039530">
    <property type="entry name" value="L_methyltransferase_rhabdo"/>
</dbReference>
<dbReference type="InterPro" id="IPR039736">
    <property type="entry name" value="L_poly_C"/>
</dbReference>
<dbReference type="InterPro" id="IPR048398">
    <property type="entry name" value="Methyltrans_Mon_C"/>
</dbReference>
<dbReference type="InterPro" id="IPR048397">
    <property type="entry name" value="Methyltrans_Mon_CD"/>
</dbReference>
<dbReference type="InterPro" id="IPR026890">
    <property type="entry name" value="Mononeg_mRNAcap"/>
</dbReference>
<dbReference type="InterPro" id="IPR014023">
    <property type="entry name" value="Mononeg_RNA_pol_cat"/>
</dbReference>
<dbReference type="InterPro" id="IPR025786">
    <property type="entry name" value="Mononega_L_MeTrfase"/>
</dbReference>
<dbReference type="InterPro" id="IPR017234">
    <property type="entry name" value="RNA-dir_pol_rhabdovirus"/>
</dbReference>
<dbReference type="NCBIfam" id="TIGR04198">
    <property type="entry name" value="paramyx_RNAcap"/>
    <property type="match status" value="1"/>
</dbReference>
<dbReference type="Pfam" id="PF21080">
    <property type="entry name" value="Methyltrans_Mon_1st"/>
    <property type="match status" value="1"/>
</dbReference>
<dbReference type="Pfam" id="PF14314">
    <property type="entry name" value="Methyltrans_Mon_2nd"/>
    <property type="match status" value="1"/>
</dbReference>
<dbReference type="Pfam" id="PF21081">
    <property type="entry name" value="Methyltrans_Mon_3rd"/>
    <property type="match status" value="1"/>
</dbReference>
<dbReference type="Pfam" id="PF14318">
    <property type="entry name" value="Mononeg_mRNAcap"/>
    <property type="match status" value="1"/>
</dbReference>
<dbReference type="Pfam" id="PF00946">
    <property type="entry name" value="Mononeg_RNA_pol"/>
    <property type="match status" value="1"/>
</dbReference>
<dbReference type="PIRSF" id="PIRSF037546">
    <property type="entry name" value="RNA_pol_RhabdoV_sub"/>
    <property type="match status" value="1"/>
</dbReference>
<dbReference type="PROSITE" id="PS50526">
    <property type="entry name" value="RDRP_SSRNA_NEG_NONSEG"/>
    <property type="match status" value="1"/>
</dbReference>
<dbReference type="PROSITE" id="PS51590">
    <property type="entry name" value="SAM_MT_MNV_L"/>
    <property type="match status" value="1"/>
</dbReference>
<comment type="function">
    <text evidence="1">RNA-directed RNA polymerase that catalyzes the transcription of viral mRNAs, their capping and polyadenylation. The template is composed of the viral RNA tightly encapsidated by the nucleoprotein (N). The viral polymerase binds to the genomic RNA at the 3' leader promoter, and transcribes subsequently all viral mRNAs with a decreasing efficiency. The first gene is the most transcribed, and the last the least transcribed. The viral phosphoprotein acts as a processivity factor. Capping is concomitant with initiation of mRNA transcription. Indeed, a GDP polyribonucleotidyl transferase (PRNTase) adds the cap structure when the nascent RNA chain length has reached few nucleotides. Ribose 2'-O methylation of viral mRNA cap precedes and facilitates subsequent guanine-N-7 methylation, both activities being carried by the viral polymerase. Polyadenylation of mRNAs occur by a stuttering mechanism at a slipery stop site present at the end viral genes. After finishing transcription of a mRNA, the polymerase can resume transcription of the downstream gene.</text>
</comment>
<comment type="function">
    <text evidence="1">RNA-directed RNA polymerase that catalyzes the replication of viral genomic RNA. The template is composed of the viral RNA tightly encapsidated by the nucleoprotein (N). The replicase mode is dependent on intracellular N protein concentration. In this mode, the polymerase replicates the whole viral genome without recognizing transcriptional signals, and the replicated genome is not caped or polyadenylated.</text>
</comment>
<comment type="catalytic activity">
    <reaction evidence="3">
        <text>RNA(n) + a ribonucleoside 5'-triphosphate = RNA(n+1) + diphosphate</text>
        <dbReference type="Rhea" id="RHEA:21248"/>
        <dbReference type="Rhea" id="RHEA-COMP:14527"/>
        <dbReference type="Rhea" id="RHEA-COMP:17342"/>
        <dbReference type="ChEBI" id="CHEBI:33019"/>
        <dbReference type="ChEBI" id="CHEBI:61557"/>
        <dbReference type="ChEBI" id="CHEBI:140395"/>
        <dbReference type="EC" id="2.7.7.48"/>
    </reaction>
</comment>
<comment type="catalytic activity">
    <reaction evidence="1">
        <text>a 5'-end (5'-triphosphoguanosine)-adenylyl-adenylyl-cytidylyl-adenosine in mRNA + 2 S-adenosyl-L-methionine = a 5'-end (N(7)-methyl 5'-triphosphoguanosine)-(2'-O-methyladenylyl)-adenylyl-cytidylyl-adenosine in mRNA + 2 S-adenosyl-L-homocysteine + H(+)</text>
        <dbReference type="Rhea" id="RHEA:65376"/>
        <dbReference type="Rhea" id="RHEA-COMP:16797"/>
        <dbReference type="Rhea" id="RHEA-COMP:16798"/>
        <dbReference type="ChEBI" id="CHEBI:15378"/>
        <dbReference type="ChEBI" id="CHEBI:57856"/>
        <dbReference type="ChEBI" id="CHEBI:59789"/>
        <dbReference type="ChEBI" id="CHEBI:156483"/>
        <dbReference type="ChEBI" id="CHEBI:156484"/>
        <dbReference type="EC" id="2.1.1.375"/>
    </reaction>
</comment>
<comment type="catalytic activity">
    <reaction evidence="1">
        <text>a 5'-end (5'-triphosphoguanosine)-adenylyl-adenylyl-cytidylyl-adenosine in mRNA + S-adenosyl-L-methionine = a 5'-end (5'-triphosphoguanosine)-(2'-O-methyladenylyl)-adenylyl-cytidylyl-adenosine in mRNA + S-adenosyl-L-homocysteine + H(+)</text>
        <dbReference type="Rhea" id="RHEA:65380"/>
        <dbReference type="Rhea" id="RHEA-COMP:16797"/>
        <dbReference type="Rhea" id="RHEA-COMP:16801"/>
        <dbReference type="ChEBI" id="CHEBI:15378"/>
        <dbReference type="ChEBI" id="CHEBI:57856"/>
        <dbReference type="ChEBI" id="CHEBI:59789"/>
        <dbReference type="ChEBI" id="CHEBI:156482"/>
        <dbReference type="ChEBI" id="CHEBI:156484"/>
    </reaction>
</comment>
<comment type="catalytic activity">
    <reaction evidence="2">
        <text>a 5'-end triphospho-adenylyl-adenylyl-cytidylyl-adenosine in mRNA + GDP + H(+) = a 5'-end (5'-triphosphoguanosine)-adenylyl-adenylyl-cytidylyl-adenosine in mRNA + diphosphate</text>
        <dbReference type="Rhea" id="RHEA:65436"/>
        <dbReference type="Rhea" id="RHEA-COMP:16797"/>
        <dbReference type="Rhea" id="RHEA-COMP:16799"/>
        <dbReference type="ChEBI" id="CHEBI:15378"/>
        <dbReference type="ChEBI" id="CHEBI:33019"/>
        <dbReference type="ChEBI" id="CHEBI:58189"/>
        <dbReference type="ChEBI" id="CHEBI:156484"/>
        <dbReference type="ChEBI" id="CHEBI:156503"/>
        <dbReference type="EC" id="2.7.7.88"/>
    </reaction>
</comment>
<comment type="catalytic activity">
    <reaction evidence="1">
        <text>a 5'-end (5'-triphosphoguanosine)-(2'-O-methyladenylyl)-adenylyl-cytidylyl-adenosine in mRNA + S-adenosyl-L-methionine = a 5'-end (N(7)-methyl 5'-triphosphoguanosine)-(2'-O-methyladenylyl)-adenylyl-cytidylyl-adenosine in mRNA + S-adenosyl-L-homocysteine</text>
        <dbReference type="Rhea" id="RHEA:65440"/>
        <dbReference type="Rhea" id="RHEA-COMP:16798"/>
        <dbReference type="Rhea" id="RHEA-COMP:16801"/>
        <dbReference type="ChEBI" id="CHEBI:57856"/>
        <dbReference type="ChEBI" id="CHEBI:59789"/>
        <dbReference type="ChEBI" id="CHEBI:156482"/>
        <dbReference type="ChEBI" id="CHEBI:156483"/>
    </reaction>
</comment>
<comment type="catalytic activity">
    <reaction evidence="2">
        <text>GTP + H2O = GDP + phosphate + H(+)</text>
        <dbReference type="Rhea" id="RHEA:19669"/>
        <dbReference type="ChEBI" id="CHEBI:15377"/>
        <dbReference type="ChEBI" id="CHEBI:15378"/>
        <dbReference type="ChEBI" id="CHEBI:37565"/>
        <dbReference type="ChEBI" id="CHEBI:43474"/>
        <dbReference type="ChEBI" id="CHEBI:58189"/>
    </reaction>
</comment>
<comment type="subunit">
    <text evidence="1">May form homodimer. Interacts with the P protein.</text>
</comment>
<comment type="subcellular location">
    <subcellularLocation>
        <location evidence="1">Virion</location>
    </subcellularLocation>
    <subcellularLocation>
        <location evidence="1">Host cytoplasm</location>
    </subcellularLocation>
    <text evidence="1">L and P are packaged asymmetrically towards the blunt end of the virus.</text>
</comment>
<comment type="similarity">
    <text evidence="5">Belongs to the rhabdoviridae protein L family.</text>
</comment>
<gene>
    <name type="primary">L</name>
</gene>
<protein>
    <recommendedName>
        <fullName>RNA-directed RNA polymerase L</fullName>
        <shortName>Protein L</shortName>
    </recommendedName>
    <alternativeName>
        <fullName>Large structural protein</fullName>
    </alternativeName>
    <alternativeName>
        <fullName>Replicase</fullName>
    </alternativeName>
    <alternativeName>
        <fullName>Transcriptase</fullName>
    </alternativeName>
    <domain>
        <recommendedName>
            <fullName>RNA-directed RNA polymerase</fullName>
            <ecNumber evidence="2">2.7.7.48</ecNumber>
        </recommendedName>
    </domain>
    <domain>
        <recommendedName>
            <fullName evidence="1">GTP phosphohydrolase</fullName>
            <ecNumber evidence="1">3.6.1.-</ecNumber>
        </recommendedName>
    </domain>
    <domain>
        <recommendedName>
            <fullName evidence="5">GDP polyribonucleotidyltransferase</fullName>
            <ecNumber evidence="1">2.7.7.88</ecNumber>
        </recommendedName>
        <alternativeName>
            <fullName evidence="5">PRNTase</fullName>
        </alternativeName>
    </domain>
    <domain>
        <recommendedName>
            <fullName evidence="5">mRNA cap methyltransferase</fullName>
            <ecNumber evidence="1">2.1.1.375</ecNumber>
        </recommendedName>
        <alternativeName>
            <fullName evidence="1">mRNA (guanine-N(7)-)-methyltransferase</fullName>
            <shortName evidence="1">G-N7-MTase</shortName>
        </alternativeName>
        <alternativeName>
            <fullName evidence="1">mRNA (nucleoside-2'-O-)-methyltransferase</fullName>
            <shortName evidence="1">N1-2'-O-MTase</shortName>
        </alternativeName>
    </domain>
</protein>
<feature type="chain" id="PRO_0000297835" description="RNA-directed RNA polymerase L">
    <location>
        <begin position="1"/>
        <end position="2127"/>
    </location>
</feature>
<feature type="domain" description="RdRp catalytic" evidence="3">
    <location>
        <begin position="611"/>
        <end position="799"/>
    </location>
</feature>
<feature type="domain" description="Mononegavirus-type SAM-dependent 2'-O-MTase" evidence="4">
    <location>
        <begin position="1674"/>
        <end position="1871"/>
    </location>
</feature>
<keyword id="KW-0067">ATP-binding</keyword>
<keyword id="KW-1035">Host cytoplasm</keyword>
<keyword id="KW-0378">Hydrolase</keyword>
<keyword id="KW-0489">Methyltransferase</keyword>
<keyword id="KW-0506">mRNA capping</keyword>
<keyword id="KW-0507">mRNA processing</keyword>
<keyword id="KW-0511">Multifunctional enzyme</keyword>
<keyword id="KW-0547">Nucleotide-binding</keyword>
<keyword id="KW-0548">Nucleotidyltransferase</keyword>
<keyword id="KW-1185">Reference proteome</keyword>
<keyword id="KW-0696">RNA-directed RNA polymerase</keyword>
<keyword id="KW-0949">S-adenosyl-L-methionine</keyword>
<keyword id="KW-0808">Transferase</keyword>
<keyword id="KW-0693">Viral RNA replication</keyword>
<keyword id="KW-0946">Virion</keyword>
<name>L_EBLV2</name>
<reference key="1">
    <citation type="journal article" date="2007" name="J. Gen. Virol.">
        <title>Comparative analysis of the full genome sequence of European bat lyssavirus type 1 and type 2 with other lyssaviruses and evidence for a conserved transcription termination and polyadenylation motif in the G-L 3' non-translated region.</title>
        <authorList>
            <person name="Marston D.A."/>
            <person name="McElhinney L.M."/>
            <person name="Johnson N."/>
            <person name="Muller T."/>
            <person name="Conzelmann K.K."/>
            <person name="Tordo N."/>
            <person name="Fooks A.R."/>
        </authorList>
    </citation>
    <scope>NUCLEOTIDE SEQUENCE [GENOMIC RNA]</scope>
</reference>
<accession>A4UHQ7</accession>
<organism>
    <name type="scientific">European bat lyssavirus 2 (strain Human/Scotland/RV1333/2002)</name>
    <name type="common">EBLV2</name>
    <dbReference type="NCBI Taxonomy" id="453116"/>
    <lineage>
        <taxon>Viruses</taxon>
        <taxon>Riboviria</taxon>
        <taxon>Orthornavirae</taxon>
        <taxon>Negarnaviricota</taxon>
        <taxon>Haploviricotina</taxon>
        <taxon>Monjiviricetes</taxon>
        <taxon>Mononegavirales</taxon>
        <taxon>Rhabdoviridae</taxon>
        <taxon>Alpharhabdovirinae</taxon>
        <taxon>Lyssavirus</taxon>
        <taxon>Lyssavirus hamburg</taxon>
    </lineage>
</organism>
<evidence type="ECO:0000250" key="1">
    <source>
        <dbReference type="UniProtKB" id="P03523"/>
    </source>
</evidence>
<evidence type="ECO:0000250" key="2">
    <source>
        <dbReference type="UniProtKB" id="P28887"/>
    </source>
</evidence>
<evidence type="ECO:0000255" key="3">
    <source>
        <dbReference type="PROSITE-ProRule" id="PRU00539"/>
    </source>
</evidence>
<evidence type="ECO:0000255" key="4">
    <source>
        <dbReference type="PROSITE-ProRule" id="PRU00923"/>
    </source>
</evidence>
<evidence type="ECO:0000305" key="5"/>
<proteinExistence type="inferred from homology"/>
<sequence>MIDPLEVYDDPVDPVEPEIDARSNSVVPNILRNSDYNLNSPLIEDPSKLMLDWLITGNKPARLNLTDNSLRSYKVLKSYFKKLDVGSLRVGGLGAQSMMSLWLHGAHSESTRSRKCLSDLALFYQRSAPIEKLLNYTLENRGLAIPTDGVLSSLKKVNYDRAFGRYLGNLYSSYLFFHVIILYMNALDWEEEKTILALWKDLNSVDIKKDQVKFRDQIWGSLLVTKDFVYSQSANCLFDRNYTLMLKDLFLSRFNSLLILLSPPEPRYSEDLISQLCQLYIAGDNVLSTCGNSGYDVIKMLEPYVVNSLVQRAEGFRPMIHSLGDFPTFIKDKVSQLEGTFGPSARNFFFVLDQLDNIHDLVFVYGCYRHWGHPYIDYRKGLSKLYDQVHVKKVIDGDYQECLASDLAKRILRWGFDKYSKWYLDPKLLEKDHPLIPYIQTQTWPPKHIVDIVGNTWHKLPITQIFEIPESMDPSEILDDKSHSFTRTKLASWLSDHRGGPVPSEKVIITALSRPPVNPREFLKSIDLGGLPDDDLIIGLKPKERELKIEGRFFALMSWNLRLYFVITEKLLANYILPLFDALTMTDNLNKVFKKLIDRVTGQGLQDYSRVTYAFHLDYEKWNNHQRLESTKDVFSVLDYVFGLKKVFSRTHEFFQKSWVYYSDRSDLIGLWEDQIYCLDMSDGPTCWNGQDGGLEGLRQKGWSLVSLLMIDRESQTRNTRTKILAQGDNQVLCPTYMLSSGLTQEGLIYELDSISRNALSIYRAIEEGASKLGLIIKKEETMCSYDFLIYGKTPLFRGNILVPESKRWARVSCISNDQIVNLANIMSTVSTNALTVAQHSQSLIKPMRDFLLMAVQAVFHYLLFSPILKDRVYKILSAEGDNFLLAMSRIIYLDPSLGGVSGMSLGRFHIRQFSDPVSEGLAFWKEIWSSSSESWIHSLCQEAGNPDLGDRSLESFTRLLEDPTTLNIRGGASPTILLKEAIRKALYDEVDKVENSEFREAILLSKTHRDNFILFLKSIEPLFPRFLSELFSSSFLGIPESIIGLIQNSRTIRRQFRRSLSRTLEESFFNSEIHGINRMTQVPQRVGRVWNCSAERADLLREISWGRKVVGTTVPHPGEMLVLLPKSSVSCVCKQTGEDSPRISVSVLPSFDQSFFSRGPLKGYLGSSTSMSTQLFHAWEKVTNVHVVKRALSLKESINWFIARDSNLAQTLIRNITSLTGPQFPLEETPVFKRTGSALHRFKSARYSEGGYSSICPNLLSHISVSTDTMSDLTQDGKNFDFMFQPLMLYAQTWTSELVQKDIRLRDSTFHWHLRCLKCIRPIDDIILDAPQVFMFPDVSKRISRMVSGAVPQFQRLPEINLKPGKFEALDSKDKSRHIGTAQGLLYSILVAIHDSGYNDATIFPMNIYSKISPRDYLRGLSRGILIGSSICFLTRMTNININRPLELISGVISYILLRLDNHPSLYVMLREPSLRSEIFSIPQKIPAAYPTTMKEGNRSVLCYLQHVLRYERDVITASPENDWLWIFSDFRSAKMTYLTLVTYQSHILLQKIEKNLPKQMRIRLRQLSSLMRQILGGHGEDTLDSDEDIQGLLRDALQRTRWVDQEVRHAAKTMTGDHSPSKKVSRKAGCSEWICSAQQVAISTSSNPAPTSEMDVRALSRRFQNPLISGLRVVQWATGAHYKLKPILDNLEAYPSLCLVVGDGSGGISRTVLSMFPDAKLVFNSLLEVNDFMASGTHPLPPSAIVSGGDDIVSRVIDFGSIWEKPSDLRNLSTWRYFQSIQTVNNMSYDLIVCDAEVTDIPSVNKITLLMSDFSLSINGPLNLIFKTYGTMLVNPDYKAIQHLSRAFPSVTGYITQMTSSFSSELYLKFSKRGKFFRDAEYLTSSTLREMSLVLFNCSSPKSEMQRARSLNYQDLVRGFPEEIISNPYNEMIITLIDSEVESFLVHKMVDDLELQRGTLAKMSIIIAIVMVFSNRVFNVSKPLTDPMFYPPSDPKILRHFNICCSTLMYLSTALGDVLNFARLHELYNNPITYYFKKQVIRGSIYLSWSWCDTTSVFKKVACNSNLSLSSHWIRLIYKIVRTTRLAGSSNDLSKEVEKHLKGYNRWISFDDIRSRSSLLDYSCL</sequence>
<organismHost>
    <name type="scientific">Mammalia</name>
    <dbReference type="NCBI Taxonomy" id="40674"/>
</organismHost>